<keyword id="KW-0963">Cytoplasm</keyword>
<keyword id="KW-1267">Proteomics identification</keyword>
<keyword id="KW-1185">Reference proteome</keyword>
<keyword id="KW-0677">Repeat</keyword>
<keyword id="KW-0802">TPR repeat</keyword>
<dbReference type="EMBL" id="AF539468">
    <property type="protein sequence ID" value="AAN16377.1"/>
    <property type="molecule type" value="mRNA"/>
</dbReference>
<dbReference type="EMBL" id="AL157367">
    <property type="status" value="NOT_ANNOTATED_CDS"/>
    <property type="molecule type" value="Genomic_DNA"/>
</dbReference>
<dbReference type="SMR" id="Q8IZP2"/>
<dbReference type="FunCoup" id="Q8IZP2">
    <property type="interactions" value="172"/>
</dbReference>
<dbReference type="IntAct" id="Q8IZP2">
    <property type="interactions" value="9"/>
</dbReference>
<dbReference type="iPTMnet" id="Q8IZP2"/>
<dbReference type="PhosphoSitePlus" id="Q8IZP2"/>
<dbReference type="SwissPalm" id="Q8IZP2"/>
<dbReference type="BioMuta" id="HGNC:18487"/>
<dbReference type="DMDM" id="74762505"/>
<dbReference type="jPOST" id="Q8IZP2"/>
<dbReference type="MassIVE" id="Q8IZP2"/>
<dbReference type="ProteomicsDB" id="71392"/>
<dbReference type="Pumba" id="Q8IZP2"/>
<dbReference type="AGR" id="HGNC:18487"/>
<dbReference type="GeneCards" id="ST13P4"/>
<dbReference type="HGNC" id="HGNC:18487">
    <property type="gene designation" value="ST13P4"/>
</dbReference>
<dbReference type="neXtProt" id="NX_Q8IZP2"/>
<dbReference type="InParanoid" id="Q8IZP2"/>
<dbReference type="PAN-GO" id="Q8IZP2">
    <property type="GO annotations" value="0 GO annotations based on evolutionary models"/>
</dbReference>
<dbReference type="PathwayCommons" id="Q8IZP2"/>
<dbReference type="SignaLink" id="Q8IZP2"/>
<dbReference type="Pharos" id="Q8IZP2">
    <property type="development level" value="Tdark"/>
</dbReference>
<dbReference type="PRO" id="PR:Q8IZP2"/>
<dbReference type="Proteomes" id="UP000005640">
    <property type="component" value="Unplaced"/>
</dbReference>
<dbReference type="RNAct" id="Q8IZP2">
    <property type="molecule type" value="protein"/>
</dbReference>
<dbReference type="GO" id="GO:0005737">
    <property type="term" value="C:cytoplasm"/>
    <property type="evidence" value="ECO:0007669"/>
    <property type="project" value="UniProtKB-SubCell"/>
</dbReference>
<dbReference type="GO" id="GO:0070062">
    <property type="term" value="C:extracellular exosome"/>
    <property type="evidence" value="ECO:0007005"/>
    <property type="project" value="UniProtKB"/>
</dbReference>
<dbReference type="GO" id="GO:0046983">
    <property type="term" value="F:protein dimerization activity"/>
    <property type="evidence" value="ECO:0007669"/>
    <property type="project" value="InterPro"/>
</dbReference>
<dbReference type="CDD" id="cd14438">
    <property type="entry name" value="Hip_N"/>
    <property type="match status" value="1"/>
</dbReference>
<dbReference type="FunFam" id="1.25.40.10:FF:000080">
    <property type="entry name" value="hsc70-interacting protein-like isoform X1"/>
    <property type="match status" value="1"/>
</dbReference>
<dbReference type="FunFam" id="6.10.250.3420:FF:000001">
    <property type="entry name" value="Hsc70-interacting protein-like protein"/>
    <property type="match status" value="1"/>
</dbReference>
<dbReference type="Gene3D" id="6.10.250.3420">
    <property type="match status" value="1"/>
</dbReference>
<dbReference type="Gene3D" id="1.25.40.10">
    <property type="entry name" value="Tetratricopeptide repeat domain"/>
    <property type="match status" value="1"/>
</dbReference>
<dbReference type="InterPro" id="IPR034649">
    <property type="entry name" value="Hip_N"/>
</dbReference>
<dbReference type="InterPro" id="IPR011990">
    <property type="entry name" value="TPR-like_helical_dom_sf"/>
</dbReference>
<dbReference type="InterPro" id="IPR019734">
    <property type="entry name" value="TPR_rpt"/>
</dbReference>
<dbReference type="PANTHER" id="PTHR45883">
    <property type="entry name" value="HSC70-INTERACTING PROTEIN"/>
    <property type="match status" value="1"/>
</dbReference>
<dbReference type="PANTHER" id="PTHR45883:SF3">
    <property type="entry name" value="PROTEIN FAM10A4-RELATED"/>
    <property type="match status" value="1"/>
</dbReference>
<dbReference type="Pfam" id="PF18253">
    <property type="entry name" value="HipN"/>
    <property type="match status" value="1"/>
</dbReference>
<dbReference type="Pfam" id="PF13181">
    <property type="entry name" value="TPR_8"/>
    <property type="match status" value="1"/>
</dbReference>
<dbReference type="SMART" id="SM00028">
    <property type="entry name" value="TPR"/>
    <property type="match status" value="3"/>
</dbReference>
<dbReference type="SUPFAM" id="SSF48452">
    <property type="entry name" value="TPR-like"/>
    <property type="match status" value="1"/>
</dbReference>
<dbReference type="PROSITE" id="PS50005">
    <property type="entry name" value="TPR"/>
    <property type="match status" value="3"/>
</dbReference>
<dbReference type="PROSITE" id="PS50293">
    <property type="entry name" value="TPR_REGION"/>
    <property type="match status" value="1"/>
</dbReference>
<evidence type="ECO:0000256" key="1">
    <source>
        <dbReference type="SAM" id="MobiDB-lite"/>
    </source>
</evidence>
<evidence type="ECO:0000269" key="2">
    <source>
    </source>
</evidence>
<evidence type="ECO:0000305" key="3"/>
<name>ST134_HUMAN</name>
<reference key="1">
    <citation type="journal article" date="2002" name="Genomics">
        <title>Characterization of FAM10A4, a member of the ST13 tumor suppressor gene family that maps to the 13q14.3 region associated with B-Cell leukemia, multiple myeloma, and prostate cancer.</title>
        <authorList>
            <person name="Sossey-Alaoui K."/>
            <person name="Kitamura E."/>
            <person name="Head K."/>
            <person name="Cowell J.K."/>
        </authorList>
    </citation>
    <scope>NUCLEOTIDE SEQUENCE [MRNA]</scope>
    <scope>TISSUE SPECIFICITY</scope>
    <scope>VARIANT LEU-71</scope>
</reference>
<reference key="2">
    <citation type="journal article" date="2004" name="Nature">
        <title>The DNA sequence and analysis of human chromosome 13.</title>
        <authorList>
            <person name="Dunham A."/>
            <person name="Matthews L.H."/>
            <person name="Burton J."/>
            <person name="Ashurst J.L."/>
            <person name="Howe K.L."/>
            <person name="Ashcroft K.J."/>
            <person name="Beare D.M."/>
            <person name="Burford D.C."/>
            <person name="Hunt S.E."/>
            <person name="Griffiths-Jones S."/>
            <person name="Jones M.C."/>
            <person name="Keenan S.J."/>
            <person name="Oliver K."/>
            <person name="Scott C.E."/>
            <person name="Ainscough R."/>
            <person name="Almeida J.P."/>
            <person name="Ambrose K.D."/>
            <person name="Andrews D.T."/>
            <person name="Ashwell R.I.S."/>
            <person name="Babbage A.K."/>
            <person name="Bagguley C.L."/>
            <person name="Bailey J."/>
            <person name="Bannerjee R."/>
            <person name="Barlow K.F."/>
            <person name="Bates K."/>
            <person name="Beasley H."/>
            <person name="Bird C.P."/>
            <person name="Bray-Allen S."/>
            <person name="Brown A.J."/>
            <person name="Brown J.Y."/>
            <person name="Burrill W."/>
            <person name="Carder C."/>
            <person name="Carter N.P."/>
            <person name="Chapman J.C."/>
            <person name="Clamp M.E."/>
            <person name="Clark S.Y."/>
            <person name="Clarke G."/>
            <person name="Clee C.M."/>
            <person name="Clegg S.C."/>
            <person name="Cobley V."/>
            <person name="Collins J.E."/>
            <person name="Corby N."/>
            <person name="Coville G.J."/>
            <person name="Deloukas P."/>
            <person name="Dhami P."/>
            <person name="Dunham I."/>
            <person name="Dunn M."/>
            <person name="Earthrowl M.E."/>
            <person name="Ellington A.G."/>
            <person name="Faulkner L."/>
            <person name="Frankish A.G."/>
            <person name="Frankland J."/>
            <person name="French L."/>
            <person name="Garner P."/>
            <person name="Garnett J."/>
            <person name="Gilbert J.G.R."/>
            <person name="Gilson C.J."/>
            <person name="Ghori J."/>
            <person name="Grafham D.V."/>
            <person name="Gribble S.M."/>
            <person name="Griffiths C."/>
            <person name="Hall R.E."/>
            <person name="Hammond S."/>
            <person name="Harley J.L."/>
            <person name="Hart E.A."/>
            <person name="Heath P.D."/>
            <person name="Howden P.J."/>
            <person name="Huckle E.J."/>
            <person name="Hunt P.J."/>
            <person name="Hunt A.R."/>
            <person name="Johnson C."/>
            <person name="Johnson D."/>
            <person name="Kay M."/>
            <person name="Kimberley A.M."/>
            <person name="King A."/>
            <person name="Laird G.K."/>
            <person name="Langford C.J."/>
            <person name="Lawlor S."/>
            <person name="Leongamornlert D.A."/>
            <person name="Lloyd D.M."/>
            <person name="Lloyd C."/>
            <person name="Loveland J.E."/>
            <person name="Lovell J."/>
            <person name="Martin S."/>
            <person name="Mashreghi-Mohammadi M."/>
            <person name="McLaren S.J."/>
            <person name="McMurray A."/>
            <person name="Milne S."/>
            <person name="Moore M.J.F."/>
            <person name="Nickerson T."/>
            <person name="Palmer S.A."/>
            <person name="Pearce A.V."/>
            <person name="Peck A.I."/>
            <person name="Pelan S."/>
            <person name="Phillimore B."/>
            <person name="Porter K.M."/>
            <person name="Rice C.M."/>
            <person name="Searle S."/>
            <person name="Sehra H.K."/>
            <person name="Shownkeen R."/>
            <person name="Skuce C.D."/>
            <person name="Smith M."/>
            <person name="Steward C.A."/>
            <person name="Sycamore N."/>
            <person name="Tester J."/>
            <person name="Thomas D.W."/>
            <person name="Tracey A."/>
            <person name="Tromans A."/>
            <person name="Tubby B."/>
            <person name="Wall M."/>
            <person name="Wallis J.M."/>
            <person name="West A.P."/>
            <person name="Whitehead S.L."/>
            <person name="Willey D.L."/>
            <person name="Wilming L."/>
            <person name="Wray P.W."/>
            <person name="Wright M.W."/>
            <person name="Young L."/>
            <person name="Coulson A."/>
            <person name="Durbin R.M."/>
            <person name="Hubbard T."/>
            <person name="Sulston J.E."/>
            <person name="Beck S."/>
            <person name="Bentley D.R."/>
            <person name="Rogers J."/>
            <person name="Ross M.T."/>
        </authorList>
    </citation>
    <scope>NUCLEOTIDE SEQUENCE [LARGE SCALE GENOMIC DNA]</scope>
</reference>
<comment type="subcellular location">
    <subcellularLocation>
        <location evidence="3">Cytoplasm</location>
    </subcellularLocation>
</comment>
<comment type="tissue specificity">
    <text evidence="2">Highly expressed in bone marrow and weakly in placenta, pancreas, heart and HeLa cell line.</text>
</comment>
<comment type="similarity">
    <text evidence="3">Belongs to the FAM10 family.</text>
</comment>
<comment type="caution">
    <text evidence="3">Could be the product of a pseudogene.</text>
</comment>
<sequence>MDPRKVNELRAFVKMCKKDPSILHTQEMRFLREWVESMGGTATQKAKSEENTKEEKPDSKVEEDLKADEPSSEESDLEIDKEGVIEPDTDAPQEMGDENAEITEEVMDQANDKKVAAIEALNDGELQKAIDLFTDAIKLNPRLAILYAKRASVFVKLQKPNAAIRDCDRAIEINPDSAQPYKRRGKAHRLLGHWEEAAHDLALACKFDYDEDASAMLKEVQPRAQKIAEHQRKYERKREE</sequence>
<proteinExistence type="uncertain"/>
<protein>
    <recommendedName>
        <fullName>Putative protein FAM10A4</fullName>
    </recommendedName>
    <alternativeName>
        <fullName>Suppression of tumorigenicity 13 pseudogene 4</fullName>
    </alternativeName>
</protein>
<feature type="chain" id="PRO_0000190816" description="Putative protein FAM10A4">
    <location>
        <begin position="1"/>
        <end position="240"/>
    </location>
</feature>
<feature type="repeat" description="TPR 1">
    <location>
        <begin position="110"/>
        <end position="143"/>
    </location>
</feature>
<feature type="repeat" description="TPR 2">
    <location>
        <begin position="145"/>
        <end position="177"/>
    </location>
</feature>
<feature type="repeat" description="TPR 3">
    <location>
        <begin position="179"/>
        <end position="211"/>
    </location>
</feature>
<feature type="region of interest" description="Disordered" evidence="1">
    <location>
        <begin position="38"/>
        <end position="94"/>
    </location>
</feature>
<feature type="region of interest" description="Disordered" evidence="1">
    <location>
        <begin position="220"/>
        <end position="240"/>
    </location>
</feature>
<feature type="compositionally biased region" description="Basic and acidic residues" evidence="1">
    <location>
        <begin position="46"/>
        <end position="69"/>
    </location>
</feature>
<feature type="compositionally biased region" description="Acidic residues" evidence="1">
    <location>
        <begin position="85"/>
        <end position="94"/>
    </location>
</feature>
<feature type="compositionally biased region" description="Basic and acidic residues" evidence="1">
    <location>
        <begin position="226"/>
        <end position="240"/>
    </location>
</feature>
<feature type="sequence variant" id="VAR_023644" evidence="2">
    <original>S</original>
    <variation>L</variation>
    <location>
        <position position="71"/>
    </location>
</feature>
<gene>
    <name type="primary">ST13P4</name>
    <name type="synonym">FAM10A4</name>
</gene>
<organism>
    <name type="scientific">Homo sapiens</name>
    <name type="common">Human</name>
    <dbReference type="NCBI Taxonomy" id="9606"/>
    <lineage>
        <taxon>Eukaryota</taxon>
        <taxon>Metazoa</taxon>
        <taxon>Chordata</taxon>
        <taxon>Craniata</taxon>
        <taxon>Vertebrata</taxon>
        <taxon>Euteleostomi</taxon>
        <taxon>Mammalia</taxon>
        <taxon>Eutheria</taxon>
        <taxon>Euarchontoglires</taxon>
        <taxon>Primates</taxon>
        <taxon>Haplorrhini</taxon>
        <taxon>Catarrhini</taxon>
        <taxon>Hominidae</taxon>
        <taxon>Homo</taxon>
    </lineage>
</organism>
<accession>Q8IZP2</accession>